<comment type="function">
    <text evidence="1">Fluoride-specific ion channel. Important for reducing fluoride concentration in the cell, thus reducing its toxicity.</text>
</comment>
<comment type="catalytic activity">
    <reaction evidence="1">
        <text>fluoride(in) = fluoride(out)</text>
        <dbReference type="Rhea" id="RHEA:76159"/>
        <dbReference type="ChEBI" id="CHEBI:17051"/>
    </reaction>
    <physiologicalReaction direction="left-to-right" evidence="1">
        <dbReference type="Rhea" id="RHEA:76160"/>
    </physiologicalReaction>
</comment>
<comment type="activity regulation">
    <text evidence="1">Na(+) is not transported, but it plays an essential structural role and its presence is essential for fluoride channel function.</text>
</comment>
<comment type="subcellular location">
    <subcellularLocation>
        <location evidence="1">Cell membrane</location>
        <topology evidence="1">Multi-pass membrane protein</topology>
    </subcellularLocation>
</comment>
<comment type="similarity">
    <text evidence="1">Belongs to the fluoride channel Fluc/FEX (TC 1.A.43) family.</text>
</comment>
<name>FLUC2_STRCO</name>
<organism>
    <name type="scientific">Streptomyces coelicolor (strain ATCC BAA-471 / A3(2) / M145)</name>
    <dbReference type="NCBI Taxonomy" id="100226"/>
    <lineage>
        <taxon>Bacteria</taxon>
        <taxon>Bacillati</taxon>
        <taxon>Actinomycetota</taxon>
        <taxon>Actinomycetes</taxon>
        <taxon>Kitasatosporales</taxon>
        <taxon>Streptomycetaceae</taxon>
        <taxon>Streptomyces</taxon>
        <taxon>Streptomyces albidoflavus group</taxon>
    </lineage>
</organism>
<reference key="1">
    <citation type="journal article" date="2002" name="Nature">
        <title>Complete genome sequence of the model actinomycete Streptomyces coelicolor A3(2).</title>
        <authorList>
            <person name="Bentley S.D."/>
            <person name="Chater K.F."/>
            <person name="Cerdeno-Tarraga A.-M."/>
            <person name="Challis G.L."/>
            <person name="Thomson N.R."/>
            <person name="James K.D."/>
            <person name="Harris D.E."/>
            <person name="Quail M.A."/>
            <person name="Kieser H."/>
            <person name="Harper D."/>
            <person name="Bateman A."/>
            <person name="Brown S."/>
            <person name="Chandra G."/>
            <person name="Chen C.W."/>
            <person name="Collins M."/>
            <person name="Cronin A."/>
            <person name="Fraser A."/>
            <person name="Goble A."/>
            <person name="Hidalgo J."/>
            <person name="Hornsby T."/>
            <person name="Howarth S."/>
            <person name="Huang C.-H."/>
            <person name="Kieser T."/>
            <person name="Larke L."/>
            <person name="Murphy L.D."/>
            <person name="Oliver K."/>
            <person name="O'Neil S."/>
            <person name="Rabbinowitsch E."/>
            <person name="Rajandream M.A."/>
            <person name="Rutherford K.M."/>
            <person name="Rutter S."/>
            <person name="Seeger K."/>
            <person name="Saunders D."/>
            <person name="Sharp S."/>
            <person name="Squares R."/>
            <person name="Squares S."/>
            <person name="Taylor K."/>
            <person name="Warren T."/>
            <person name="Wietzorrek A."/>
            <person name="Woodward J.R."/>
            <person name="Barrell B.G."/>
            <person name="Parkhill J."/>
            <person name="Hopwood D.A."/>
        </authorList>
    </citation>
    <scope>NUCLEOTIDE SEQUENCE [LARGE SCALE GENOMIC DNA]</scope>
    <source>
        <strain>ATCC BAA-471 / A3(2) / M145</strain>
    </source>
</reference>
<protein>
    <recommendedName>
        <fullName evidence="1">Fluoride-specific ion channel FluC 2</fullName>
    </recommendedName>
</protein>
<dbReference type="EMBL" id="AL939130">
    <property type="protein sequence ID" value="CAC01544.1"/>
    <property type="molecule type" value="Genomic_DNA"/>
</dbReference>
<dbReference type="RefSeq" id="NP_631108.1">
    <property type="nucleotide sequence ID" value="NC_003888.3"/>
</dbReference>
<dbReference type="SMR" id="Q9FC37"/>
<dbReference type="FunCoup" id="Q9FC37">
    <property type="interactions" value="1"/>
</dbReference>
<dbReference type="STRING" id="100226.gene:17764706"/>
<dbReference type="PaxDb" id="100226-SCO7046"/>
<dbReference type="KEGG" id="sco:SCO7046"/>
<dbReference type="PATRIC" id="fig|100226.15.peg.7150"/>
<dbReference type="eggNOG" id="COG0239">
    <property type="taxonomic scope" value="Bacteria"/>
</dbReference>
<dbReference type="HOGENOM" id="CLU_114342_2_1_11"/>
<dbReference type="InParanoid" id="Q9FC37"/>
<dbReference type="OrthoDB" id="5148600at2"/>
<dbReference type="PhylomeDB" id="Q9FC37"/>
<dbReference type="Proteomes" id="UP000001973">
    <property type="component" value="Chromosome"/>
</dbReference>
<dbReference type="GO" id="GO:0005886">
    <property type="term" value="C:plasma membrane"/>
    <property type="evidence" value="ECO:0000318"/>
    <property type="project" value="GO_Central"/>
</dbReference>
<dbReference type="GO" id="GO:0062054">
    <property type="term" value="F:fluoride channel activity"/>
    <property type="evidence" value="ECO:0007669"/>
    <property type="project" value="UniProtKB-UniRule"/>
</dbReference>
<dbReference type="GO" id="GO:1903425">
    <property type="term" value="F:fluoride transmembrane transporter activity"/>
    <property type="evidence" value="ECO:0000318"/>
    <property type="project" value="GO_Central"/>
</dbReference>
<dbReference type="GO" id="GO:0046872">
    <property type="term" value="F:metal ion binding"/>
    <property type="evidence" value="ECO:0007669"/>
    <property type="project" value="UniProtKB-KW"/>
</dbReference>
<dbReference type="GO" id="GO:0140114">
    <property type="term" value="P:cellular detoxification of fluoride"/>
    <property type="evidence" value="ECO:0007669"/>
    <property type="project" value="UniProtKB-UniRule"/>
</dbReference>
<dbReference type="GO" id="GO:1903424">
    <property type="term" value="P:fluoride transmembrane transport"/>
    <property type="evidence" value="ECO:0000318"/>
    <property type="project" value="GO_Central"/>
</dbReference>
<dbReference type="HAMAP" id="MF_00454">
    <property type="entry name" value="FluC"/>
    <property type="match status" value="1"/>
</dbReference>
<dbReference type="InterPro" id="IPR003691">
    <property type="entry name" value="FluC"/>
</dbReference>
<dbReference type="NCBIfam" id="TIGR00494">
    <property type="entry name" value="crcB"/>
    <property type="match status" value="1"/>
</dbReference>
<dbReference type="PANTHER" id="PTHR28259">
    <property type="entry name" value="FLUORIDE EXPORT PROTEIN 1-RELATED"/>
    <property type="match status" value="1"/>
</dbReference>
<dbReference type="PANTHER" id="PTHR28259:SF1">
    <property type="entry name" value="FLUORIDE EXPORT PROTEIN 1-RELATED"/>
    <property type="match status" value="1"/>
</dbReference>
<dbReference type="Pfam" id="PF02537">
    <property type="entry name" value="CRCB"/>
    <property type="match status" value="1"/>
</dbReference>
<accession>Q9FC37</accession>
<gene>
    <name evidence="1" type="primary">fluC2</name>
    <name evidence="1" type="synonym">crcB2</name>
    <name type="ordered locus">SCO7046</name>
    <name type="ORF">SC4G1.12</name>
</gene>
<sequence>MNWLLVVAGGMIGAPLRYLTDRAVQSRHDSVFPWGTFTVNVIGSVVLGLLTGAALAGAVGSDLRLLLGTGLCGALTTYSTFSYETLRLTETGARLHAAVNVGGSVAAGLVAAFAGVTLADALWA</sequence>
<feature type="chain" id="PRO_0000110193" description="Fluoride-specific ion channel FluC 2">
    <location>
        <begin position="1"/>
        <end position="124"/>
    </location>
</feature>
<feature type="transmembrane region" description="Helical" evidence="1">
    <location>
        <begin position="39"/>
        <end position="59"/>
    </location>
</feature>
<feature type="transmembrane region" description="Helical" evidence="1">
    <location>
        <begin position="63"/>
        <end position="82"/>
    </location>
</feature>
<feature type="transmembrane region" description="Helical" evidence="1">
    <location>
        <begin position="98"/>
        <end position="118"/>
    </location>
</feature>
<feature type="binding site" evidence="1">
    <location>
        <position position="73"/>
    </location>
    <ligand>
        <name>Na(+)</name>
        <dbReference type="ChEBI" id="CHEBI:29101"/>
        <note>structural</note>
    </ligand>
</feature>
<feature type="binding site" evidence="1">
    <location>
        <position position="76"/>
    </location>
    <ligand>
        <name>Na(+)</name>
        <dbReference type="ChEBI" id="CHEBI:29101"/>
        <note>structural</note>
    </ligand>
</feature>
<evidence type="ECO:0000255" key="1">
    <source>
        <dbReference type="HAMAP-Rule" id="MF_00454"/>
    </source>
</evidence>
<proteinExistence type="inferred from homology"/>
<keyword id="KW-1003">Cell membrane</keyword>
<keyword id="KW-0407">Ion channel</keyword>
<keyword id="KW-0406">Ion transport</keyword>
<keyword id="KW-0472">Membrane</keyword>
<keyword id="KW-0479">Metal-binding</keyword>
<keyword id="KW-1185">Reference proteome</keyword>
<keyword id="KW-0915">Sodium</keyword>
<keyword id="KW-0812">Transmembrane</keyword>
<keyword id="KW-1133">Transmembrane helix</keyword>
<keyword id="KW-0813">Transport</keyword>